<name>CE052_MOUSE</name>
<reference key="1">
    <citation type="journal article" date="2005" name="Science">
        <title>The transcriptional landscape of the mammalian genome.</title>
        <authorList>
            <person name="Carninci P."/>
            <person name="Kasukawa T."/>
            <person name="Katayama S."/>
            <person name="Gough J."/>
            <person name="Frith M.C."/>
            <person name="Maeda N."/>
            <person name="Oyama R."/>
            <person name="Ravasi T."/>
            <person name="Lenhard B."/>
            <person name="Wells C."/>
            <person name="Kodzius R."/>
            <person name="Shimokawa K."/>
            <person name="Bajic V.B."/>
            <person name="Brenner S.E."/>
            <person name="Batalov S."/>
            <person name="Forrest A.R."/>
            <person name="Zavolan M."/>
            <person name="Davis M.J."/>
            <person name="Wilming L.G."/>
            <person name="Aidinis V."/>
            <person name="Allen J.E."/>
            <person name="Ambesi-Impiombato A."/>
            <person name="Apweiler R."/>
            <person name="Aturaliya R.N."/>
            <person name="Bailey T.L."/>
            <person name="Bansal M."/>
            <person name="Baxter L."/>
            <person name="Beisel K.W."/>
            <person name="Bersano T."/>
            <person name="Bono H."/>
            <person name="Chalk A.M."/>
            <person name="Chiu K.P."/>
            <person name="Choudhary V."/>
            <person name="Christoffels A."/>
            <person name="Clutterbuck D.R."/>
            <person name="Crowe M.L."/>
            <person name="Dalla E."/>
            <person name="Dalrymple B.P."/>
            <person name="de Bono B."/>
            <person name="Della Gatta G."/>
            <person name="di Bernardo D."/>
            <person name="Down T."/>
            <person name="Engstrom P."/>
            <person name="Fagiolini M."/>
            <person name="Faulkner G."/>
            <person name="Fletcher C.F."/>
            <person name="Fukushima T."/>
            <person name="Furuno M."/>
            <person name="Futaki S."/>
            <person name="Gariboldi M."/>
            <person name="Georgii-Hemming P."/>
            <person name="Gingeras T.R."/>
            <person name="Gojobori T."/>
            <person name="Green R.E."/>
            <person name="Gustincich S."/>
            <person name="Harbers M."/>
            <person name="Hayashi Y."/>
            <person name="Hensch T.K."/>
            <person name="Hirokawa N."/>
            <person name="Hill D."/>
            <person name="Huminiecki L."/>
            <person name="Iacono M."/>
            <person name="Ikeo K."/>
            <person name="Iwama A."/>
            <person name="Ishikawa T."/>
            <person name="Jakt M."/>
            <person name="Kanapin A."/>
            <person name="Katoh M."/>
            <person name="Kawasawa Y."/>
            <person name="Kelso J."/>
            <person name="Kitamura H."/>
            <person name="Kitano H."/>
            <person name="Kollias G."/>
            <person name="Krishnan S.P."/>
            <person name="Kruger A."/>
            <person name="Kummerfeld S.K."/>
            <person name="Kurochkin I.V."/>
            <person name="Lareau L.F."/>
            <person name="Lazarevic D."/>
            <person name="Lipovich L."/>
            <person name="Liu J."/>
            <person name="Liuni S."/>
            <person name="McWilliam S."/>
            <person name="Madan Babu M."/>
            <person name="Madera M."/>
            <person name="Marchionni L."/>
            <person name="Matsuda H."/>
            <person name="Matsuzawa S."/>
            <person name="Miki H."/>
            <person name="Mignone F."/>
            <person name="Miyake S."/>
            <person name="Morris K."/>
            <person name="Mottagui-Tabar S."/>
            <person name="Mulder N."/>
            <person name="Nakano N."/>
            <person name="Nakauchi H."/>
            <person name="Ng P."/>
            <person name="Nilsson R."/>
            <person name="Nishiguchi S."/>
            <person name="Nishikawa S."/>
            <person name="Nori F."/>
            <person name="Ohara O."/>
            <person name="Okazaki Y."/>
            <person name="Orlando V."/>
            <person name="Pang K.C."/>
            <person name="Pavan W.J."/>
            <person name="Pavesi G."/>
            <person name="Pesole G."/>
            <person name="Petrovsky N."/>
            <person name="Piazza S."/>
            <person name="Reed J."/>
            <person name="Reid J.F."/>
            <person name="Ring B.Z."/>
            <person name="Ringwald M."/>
            <person name="Rost B."/>
            <person name="Ruan Y."/>
            <person name="Salzberg S.L."/>
            <person name="Sandelin A."/>
            <person name="Schneider C."/>
            <person name="Schoenbach C."/>
            <person name="Sekiguchi K."/>
            <person name="Semple C.A."/>
            <person name="Seno S."/>
            <person name="Sessa L."/>
            <person name="Sheng Y."/>
            <person name="Shibata Y."/>
            <person name="Shimada H."/>
            <person name="Shimada K."/>
            <person name="Silva D."/>
            <person name="Sinclair B."/>
            <person name="Sperling S."/>
            <person name="Stupka E."/>
            <person name="Sugiura K."/>
            <person name="Sultana R."/>
            <person name="Takenaka Y."/>
            <person name="Taki K."/>
            <person name="Tammoja K."/>
            <person name="Tan S.L."/>
            <person name="Tang S."/>
            <person name="Taylor M.S."/>
            <person name="Tegner J."/>
            <person name="Teichmann S.A."/>
            <person name="Ueda H.R."/>
            <person name="van Nimwegen E."/>
            <person name="Verardo R."/>
            <person name="Wei C.L."/>
            <person name="Yagi K."/>
            <person name="Yamanishi H."/>
            <person name="Zabarovsky E."/>
            <person name="Zhu S."/>
            <person name="Zimmer A."/>
            <person name="Hide W."/>
            <person name="Bult C."/>
            <person name="Grimmond S.M."/>
            <person name="Teasdale R.D."/>
            <person name="Liu E.T."/>
            <person name="Brusic V."/>
            <person name="Quackenbush J."/>
            <person name="Wahlestedt C."/>
            <person name="Mattick J.S."/>
            <person name="Hume D.A."/>
            <person name="Kai C."/>
            <person name="Sasaki D."/>
            <person name="Tomaru Y."/>
            <person name="Fukuda S."/>
            <person name="Kanamori-Katayama M."/>
            <person name="Suzuki M."/>
            <person name="Aoki J."/>
            <person name="Arakawa T."/>
            <person name="Iida J."/>
            <person name="Imamura K."/>
            <person name="Itoh M."/>
            <person name="Kato T."/>
            <person name="Kawaji H."/>
            <person name="Kawagashira N."/>
            <person name="Kawashima T."/>
            <person name="Kojima M."/>
            <person name="Kondo S."/>
            <person name="Konno H."/>
            <person name="Nakano K."/>
            <person name="Ninomiya N."/>
            <person name="Nishio T."/>
            <person name="Okada M."/>
            <person name="Plessy C."/>
            <person name="Shibata K."/>
            <person name="Shiraki T."/>
            <person name="Suzuki S."/>
            <person name="Tagami M."/>
            <person name="Waki K."/>
            <person name="Watahiki A."/>
            <person name="Okamura-Oho Y."/>
            <person name="Suzuki H."/>
            <person name="Kawai J."/>
            <person name="Hayashizaki Y."/>
        </authorList>
    </citation>
    <scope>NUCLEOTIDE SEQUENCE [LARGE SCALE MRNA] (ISOFORMS 1 AND 2)</scope>
    <source>
        <strain>C57BL/6J</strain>
        <tissue>Egg</tissue>
        <tissue>Testis</tissue>
    </source>
</reference>
<reference key="2">
    <citation type="journal article" date="2009" name="PLoS Biol.">
        <title>Lineage-specific biology revealed by a finished genome assembly of the mouse.</title>
        <authorList>
            <person name="Church D.M."/>
            <person name="Goodstadt L."/>
            <person name="Hillier L.W."/>
            <person name="Zody M.C."/>
            <person name="Goldstein S."/>
            <person name="She X."/>
            <person name="Bult C.J."/>
            <person name="Agarwala R."/>
            <person name="Cherry J.L."/>
            <person name="DiCuccio M."/>
            <person name="Hlavina W."/>
            <person name="Kapustin Y."/>
            <person name="Meric P."/>
            <person name="Maglott D."/>
            <person name="Birtle Z."/>
            <person name="Marques A.C."/>
            <person name="Graves T."/>
            <person name="Zhou S."/>
            <person name="Teague B."/>
            <person name="Potamousis K."/>
            <person name="Churas C."/>
            <person name="Place M."/>
            <person name="Herschleb J."/>
            <person name="Runnheim R."/>
            <person name="Forrest D."/>
            <person name="Amos-Landgraf J."/>
            <person name="Schwartz D.C."/>
            <person name="Cheng Z."/>
            <person name="Lindblad-Toh K."/>
            <person name="Eichler E.E."/>
            <person name="Ponting C.P."/>
        </authorList>
    </citation>
    <scope>NUCLEOTIDE SEQUENCE [LARGE SCALE GENOMIC DNA]</scope>
    <source>
        <strain>C57BL/6J</strain>
    </source>
</reference>
<reference key="3">
    <citation type="journal article" date="2004" name="Genome Res.">
        <title>The status, quality, and expansion of the NIH full-length cDNA project: the Mammalian Gene Collection (MGC).</title>
        <authorList>
            <consortium name="The MGC Project Team"/>
        </authorList>
    </citation>
    <scope>NUCLEOTIDE SEQUENCE [LARGE SCALE MRNA] (ISOFORM 1)</scope>
    <source>
        <tissue>Testis</tissue>
    </source>
</reference>
<organism>
    <name type="scientific">Mus musculus</name>
    <name type="common">Mouse</name>
    <dbReference type="NCBI Taxonomy" id="10090"/>
    <lineage>
        <taxon>Eukaryota</taxon>
        <taxon>Metazoa</taxon>
        <taxon>Chordata</taxon>
        <taxon>Craniata</taxon>
        <taxon>Vertebrata</taxon>
        <taxon>Euteleostomi</taxon>
        <taxon>Mammalia</taxon>
        <taxon>Eutheria</taxon>
        <taxon>Euarchontoglires</taxon>
        <taxon>Glires</taxon>
        <taxon>Rodentia</taxon>
        <taxon>Myomorpha</taxon>
        <taxon>Muroidea</taxon>
        <taxon>Muridae</taxon>
        <taxon>Murinae</taxon>
        <taxon>Mus</taxon>
        <taxon>Mus</taxon>
    </lineage>
</organism>
<accession>Q9CR34</accession>
<accession>Q3TSB3</accession>
<sequence length="168" mass="19722">MVLGLASFPESLSSQSETATQPRRPSVKWDLGSDYRKGTEETTASGSNFRRERLDSQPDLGLHVQPQIYFLRPRSPLPKLLFSLMNTNDANVKKLLPKSHLSRVIIRDNLNAQRICEMEMKASDKTKRKMSYLYDHLKKKFMMDQLRKMIRWRRDSQSTQDYLDKERV</sequence>
<keyword id="KW-0025">Alternative splicing</keyword>
<keyword id="KW-1185">Reference proteome</keyword>
<evidence type="ECO:0000256" key="1">
    <source>
        <dbReference type="SAM" id="MobiDB-lite"/>
    </source>
</evidence>
<evidence type="ECO:0000303" key="2">
    <source>
    </source>
</evidence>
<evidence type="ECO:0000305" key="3"/>
<comment type="alternative products">
    <event type="alternative splicing"/>
    <isoform>
        <id>Q9CR34-1</id>
        <name>1</name>
        <sequence type="displayed"/>
    </isoform>
    <isoform>
        <id>Q9CR34-2</id>
        <name>2</name>
        <sequence type="described" ref="VSP_034220"/>
    </isoform>
</comment>
<comment type="sequence caution" evidence="3">
    <conflict type="erroneous initiation">
        <sequence resource="EMBL-CDS" id="BAE36762"/>
    </conflict>
</comment>
<dbReference type="EMBL" id="AK006513">
    <property type="protein sequence ID" value="BAB24627.1"/>
    <property type="molecule type" value="mRNA"/>
</dbReference>
<dbReference type="EMBL" id="AK015005">
    <property type="protein sequence ID" value="BAB29667.1"/>
    <property type="molecule type" value="mRNA"/>
</dbReference>
<dbReference type="EMBL" id="AK049235">
    <property type="protein sequence ID" value="BAC33627.1"/>
    <property type="molecule type" value="mRNA"/>
</dbReference>
<dbReference type="EMBL" id="AK162162">
    <property type="protein sequence ID" value="BAE36762.1"/>
    <property type="status" value="ALT_INIT"/>
    <property type="molecule type" value="mRNA"/>
</dbReference>
<dbReference type="EMBL" id="AL731853">
    <property type="status" value="NOT_ANNOTATED_CDS"/>
    <property type="molecule type" value="Genomic_DNA"/>
</dbReference>
<dbReference type="EMBL" id="BC048445">
    <property type="protein sequence ID" value="AAH48445.1"/>
    <property type="molecule type" value="mRNA"/>
</dbReference>
<dbReference type="CCDS" id="CCDS24368.1">
    <molecule id="Q9CR34-1"/>
</dbReference>
<dbReference type="RefSeq" id="NP_080426.1">
    <molecule id="Q9CR34-1"/>
    <property type="nucleotide sequence ID" value="NM_026150.3"/>
</dbReference>
<dbReference type="SMR" id="Q9CR34"/>
<dbReference type="STRING" id="10090.ENSMUSP00000020712"/>
<dbReference type="iPTMnet" id="Q9CR34"/>
<dbReference type="PhosphoSitePlus" id="Q9CR34"/>
<dbReference type="PaxDb" id="10090-ENSMUSP00000020712"/>
<dbReference type="Antibodypedia" id="63557">
    <property type="antibodies" value="2 antibodies from 2 providers"/>
</dbReference>
<dbReference type="DNASU" id="67430"/>
<dbReference type="Ensembl" id="ENSMUST00000020712.5">
    <molecule id="Q9CR34-1"/>
    <property type="protein sequence ID" value="ENSMUSP00000020712.5"/>
    <property type="gene ID" value="ENSMUSG00000020434.5"/>
</dbReference>
<dbReference type="GeneID" id="67430"/>
<dbReference type="KEGG" id="mmu:67430"/>
<dbReference type="UCSC" id="uc007hts.2">
    <molecule id="Q9CR34-1"/>
    <property type="organism name" value="mouse"/>
</dbReference>
<dbReference type="AGR" id="MGI:1914680"/>
<dbReference type="MGI" id="MGI:1914680">
    <property type="gene designation" value="4921536K21Rik"/>
</dbReference>
<dbReference type="VEuPathDB" id="HostDB:ENSMUSG00000020434"/>
<dbReference type="eggNOG" id="ENOG502SDG0">
    <property type="taxonomic scope" value="Eukaryota"/>
</dbReference>
<dbReference type="GeneTree" id="ENSGT00390000011578"/>
<dbReference type="HOGENOM" id="CLU_116339_0_0_1"/>
<dbReference type="InParanoid" id="Q9CR34"/>
<dbReference type="OMA" id="PQIYFLR"/>
<dbReference type="OrthoDB" id="9834990at2759"/>
<dbReference type="PhylomeDB" id="Q9CR34"/>
<dbReference type="TreeFam" id="TF338723"/>
<dbReference type="BioGRID-ORCS" id="67430">
    <property type="hits" value="6 hits in 76 CRISPR screens"/>
</dbReference>
<dbReference type="PRO" id="PR:Q9CR34"/>
<dbReference type="Proteomes" id="UP000000589">
    <property type="component" value="Chromosome 11"/>
</dbReference>
<dbReference type="RNAct" id="Q9CR34">
    <property type="molecule type" value="protein"/>
</dbReference>
<dbReference type="Bgee" id="ENSMUSG00000020434">
    <property type="expression patterns" value="Expressed in animal zygote and 38 other cell types or tissues"/>
</dbReference>
<dbReference type="InterPro" id="IPR038935">
    <property type="entry name" value="C5orf52"/>
</dbReference>
<dbReference type="PANTHER" id="PTHR35666">
    <property type="entry name" value="SIMILAR TO RIKEN CDNA 4921536K21"/>
    <property type="match status" value="1"/>
</dbReference>
<dbReference type="PANTHER" id="PTHR35666:SF1">
    <property type="entry name" value="SIMILAR TO RIKEN CDNA 4921536K21"/>
    <property type="match status" value="1"/>
</dbReference>
<dbReference type="Pfam" id="PF17666">
    <property type="entry name" value="DUF5528"/>
    <property type="match status" value="1"/>
</dbReference>
<feature type="chain" id="PRO_0000341211" description="Uncharacterized protein C5orf52 homolog">
    <location>
        <begin position="1"/>
        <end position="168"/>
    </location>
</feature>
<feature type="region of interest" description="Disordered" evidence="1">
    <location>
        <begin position="1"/>
        <end position="52"/>
    </location>
</feature>
<feature type="compositionally biased region" description="Polar residues" evidence="1">
    <location>
        <begin position="10"/>
        <end position="23"/>
    </location>
</feature>
<feature type="compositionally biased region" description="Basic and acidic residues" evidence="1">
    <location>
        <begin position="31"/>
        <end position="40"/>
    </location>
</feature>
<feature type="splice variant" id="VSP_034220" description="In isoform 2." evidence="2">
    <location>
        <begin position="1"/>
        <end position="84"/>
    </location>
</feature>
<protein>
    <recommendedName>
        <fullName>Uncharacterized protein C5orf52 homolog</fullName>
    </recommendedName>
</protein>
<proteinExistence type="evidence at transcript level"/>